<accession>B5ZYT7</accession>
<reference key="1">
    <citation type="journal article" date="2010" name="Stand. Genomic Sci.">
        <title>Complete genome sequence of Rhizobium leguminosarum bv trifolii strain WSM2304, an effective microsymbiont of the South American clover Trifolium polymorphum.</title>
        <authorList>
            <person name="Reeve W."/>
            <person name="O'Hara G."/>
            <person name="Chain P."/>
            <person name="Ardley J."/>
            <person name="Brau L."/>
            <person name="Nandesena K."/>
            <person name="Tiwari R."/>
            <person name="Malfatti S."/>
            <person name="Kiss H."/>
            <person name="Lapidus A."/>
            <person name="Copeland A."/>
            <person name="Nolan M."/>
            <person name="Land M."/>
            <person name="Ivanova N."/>
            <person name="Mavromatis K."/>
            <person name="Markowitz V."/>
            <person name="Kyrpides N."/>
            <person name="Melino V."/>
            <person name="Denton M."/>
            <person name="Yates R."/>
            <person name="Howieson J."/>
        </authorList>
    </citation>
    <scope>NUCLEOTIDE SEQUENCE [LARGE SCALE GENOMIC DNA]</scope>
    <source>
        <strain>WSM2304</strain>
    </source>
</reference>
<sequence>MTDLRHYDVIVSPAITEKSTLVSENNQVVFNVAKQATKPEIKAAVEALFGVKVTAVNTLLRKGKTKRFRGFVGKQKDVKKAVVTLAEGQTIDVSTGL</sequence>
<feature type="chain" id="PRO_1000144604" description="Large ribosomal subunit protein uL23">
    <location>
        <begin position="1"/>
        <end position="97"/>
    </location>
</feature>
<name>RL23_RHILW</name>
<dbReference type="EMBL" id="CP001191">
    <property type="protein sequence ID" value="ACI54628.1"/>
    <property type="molecule type" value="Genomic_DNA"/>
</dbReference>
<dbReference type="RefSeq" id="WP_003547550.1">
    <property type="nucleotide sequence ID" value="NC_011369.1"/>
</dbReference>
<dbReference type="SMR" id="B5ZYT7"/>
<dbReference type="STRING" id="395492.Rleg2_1334"/>
<dbReference type="KEGG" id="rlt:Rleg2_1334"/>
<dbReference type="eggNOG" id="COG0089">
    <property type="taxonomic scope" value="Bacteria"/>
</dbReference>
<dbReference type="HOGENOM" id="CLU_037562_3_1_5"/>
<dbReference type="Proteomes" id="UP000008330">
    <property type="component" value="Chromosome"/>
</dbReference>
<dbReference type="GO" id="GO:1990904">
    <property type="term" value="C:ribonucleoprotein complex"/>
    <property type="evidence" value="ECO:0007669"/>
    <property type="project" value="UniProtKB-KW"/>
</dbReference>
<dbReference type="GO" id="GO:0005840">
    <property type="term" value="C:ribosome"/>
    <property type="evidence" value="ECO:0007669"/>
    <property type="project" value="UniProtKB-KW"/>
</dbReference>
<dbReference type="GO" id="GO:0019843">
    <property type="term" value="F:rRNA binding"/>
    <property type="evidence" value="ECO:0007669"/>
    <property type="project" value="UniProtKB-UniRule"/>
</dbReference>
<dbReference type="GO" id="GO:0003735">
    <property type="term" value="F:structural constituent of ribosome"/>
    <property type="evidence" value="ECO:0007669"/>
    <property type="project" value="InterPro"/>
</dbReference>
<dbReference type="GO" id="GO:0006412">
    <property type="term" value="P:translation"/>
    <property type="evidence" value="ECO:0007669"/>
    <property type="project" value="UniProtKB-UniRule"/>
</dbReference>
<dbReference type="FunFam" id="3.30.70.330:FF:000001">
    <property type="entry name" value="50S ribosomal protein L23"/>
    <property type="match status" value="1"/>
</dbReference>
<dbReference type="Gene3D" id="3.30.70.330">
    <property type="match status" value="1"/>
</dbReference>
<dbReference type="HAMAP" id="MF_01369_B">
    <property type="entry name" value="Ribosomal_uL23_B"/>
    <property type="match status" value="1"/>
</dbReference>
<dbReference type="InterPro" id="IPR012677">
    <property type="entry name" value="Nucleotide-bd_a/b_plait_sf"/>
</dbReference>
<dbReference type="InterPro" id="IPR013025">
    <property type="entry name" value="Ribosomal_uL23-like"/>
</dbReference>
<dbReference type="InterPro" id="IPR012678">
    <property type="entry name" value="Ribosomal_uL23/eL15/eS24_sf"/>
</dbReference>
<dbReference type="NCBIfam" id="NF004359">
    <property type="entry name" value="PRK05738.1-3"/>
    <property type="match status" value="1"/>
</dbReference>
<dbReference type="NCBIfam" id="NF004360">
    <property type="entry name" value="PRK05738.1-5"/>
    <property type="match status" value="1"/>
</dbReference>
<dbReference type="NCBIfam" id="NF004363">
    <property type="entry name" value="PRK05738.2-4"/>
    <property type="match status" value="1"/>
</dbReference>
<dbReference type="PANTHER" id="PTHR11620">
    <property type="entry name" value="60S RIBOSOMAL PROTEIN L23A"/>
    <property type="match status" value="1"/>
</dbReference>
<dbReference type="Pfam" id="PF00276">
    <property type="entry name" value="Ribosomal_L23"/>
    <property type="match status" value="1"/>
</dbReference>
<dbReference type="SUPFAM" id="SSF54189">
    <property type="entry name" value="Ribosomal proteins S24e, L23 and L15e"/>
    <property type="match status" value="1"/>
</dbReference>
<protein>
    <recommendedName>
        <fullName evidence="1">Large ribosomal subunit protein uL23</fullName>
    </recommendedName>
    <alternativeName>
        <fullName evidence="2">50S ribosomal protein L23</fullName>
    </alternativeName>
</protein>
<keyword id="KW-1185">Reference proteome</keyword>
<keyword id="KW-0687">Ribonucleoprotein</keyword>
<keyword id="KW-0689">Ribosomal protein</keyword>
<keyword id="KW-0694">RNA-binding</keyword>
<keyword id="KW-0699">rRNA-binding</keyword>
<gene>
    <name evidence="1" type="primary">rplW</name>
    <name type="ordered locus">Rleg2_1334</name>
</gene>
<comment type="function">
    <text evidence="1">One of the early assembly proteins it binds 23S rRNA. One of the proteins that surrounds the polypeptide exit tunnel on the outside of the ribosome. Forms the main docking site for trigger factor binding to the ribosome.</text>
</comment>
<comment type="subunit">
    <text evidence="1">Part of the 50S ribosomal subunit. Contacts protein L29, and trigger factor when it is bound to the ribosome.</text>
</comment>
<comment type="similarity">
    <text evidence="1">Belongs to the universal ribosomal protein uL23 family.</text>
</comment>
<proteinExistence type="inferred from homology"/>
<organism>
    <name type="scientific">Rhizobium leguminosarum bv. trifolii (strain WSM2304)</name>
    <dbReference type="NCBI Taxonomy" id="395492"/>
    <lineage>
        <taxon>Bacteria</taxon>
        <taxon>Pseudomonadati</taxon>
        <taxon>Pseudomonadota</taxon>
        <taxon>Alphaproteobacteria</taxon>
        <taxon>Hyphomicrobiales</taxon>
        <taxon>Rhizobiaceae</taxon>
        <taxon>Rhizobium/Agrobacterium group</taxon>
        <taxon>Rhizobium</taxon>
    </lineage>
</organism>
<evidence type="ECO:0000255" key="1">
    <source>
        <dbReference type="HAMAP-Rule" id="MF_01369"/>
    </source>
</evidence>
<evidence type="ECO:0000305" key="2"/>